<comment type="function">
    <text evidence="1 2 3">Photoreceptor required for image-forming vision at low light intensity. While most salt water fish species use retinal as chromophore, most freshwater fish use 3-dehydroretinal, or a mixture of retinal and 3-dehydroretinal (By similarity). Light-induced isomerization of 11-cis to all-trans retinal triggers a conformational change that activates signaling via G-proteins. Subsequent receptor phosphorylation mediates displacement of the bound G-protein alpha subunit by arrestin and terminates signaling (By similarity).</text>
</comment>
<comment type="subcellular location">
    <subcellularLocation>
        <location evidence="2">Membrane</location>
        <topology evidence="2">Multi-pass membrane protein</topology>
    </subcellularLocation>
    <subcellularLocation>
        <location evidence="4">Cell projection</location>
        <location evidence="4">Cilium</location>
        <location evidence="4">Photoreceptor outer segment</location>
    </subcellularLocation>
    <text evidence="2">Synthesized in the inner segment (IS) of rod photoreceptor cells before vectorial transport to disk membranes in the rod outer segment (OS) photosensory cilia.</text>
</comment>
<comment type="PTM">
    <text evidence="1">Phosphorylated on some or all of the serine and threonine residues present in the C-terminal region.</text>
</comment>
<comment type="PTM">
    <text evidence="1">Contains one covalently linked retinal chromophore.</text>
</comment>
<comment type="similarity">
    <text evidence="6">Belongs to the G-protein coupled receptor 1 family. Opsin subfamily.</text>
</comment>
<dbReference type="EMBL" id="Y18678">
    <property type="protein sequence ID" value="CAA77260.1"/>
    <property type="molecule type" value="mRNA"/>
</dbReference>
<dbReference type="SMR" id="Q9YGY9"/>
<dbReference type="GlyCosmos" id="Q9YGY9">
    <property type="glycosylation" value="3 sites, No reported glycans"/>
</dbReference>
<dbReference type="GO" id="GO:0016020">
    <property type="term" value="C:membrane"/>
    <property type="evidence" value="ECO:0000250"/>
    <property type="project" value="UniProtKB"/>
</dbReference>
<dbReference type="GO" id="GO:0097381">
    <property type="term" value="C:photoreceptor disc membrane"/>
    <property type="evidence" value="ECO:0000250"/>
    <property type="project" value="UniProtKB"/>
</dbReference>
<dbReference type="GO" id="GO:0005886">
    <property type="term" value="C:plasma membrane"/>
    <property type="evidence" value="ECO:0000250"/>
    <property type="project" value="UniProtKB"/>
</dbReference>
<dbReference type="GO" id="GO:0005502">
    <property type="term" value="F:11-cis retinal binding"/>
    <property type="evidence" value="ECO:0000250"/>
    <property type="project" value="UniProtKB"/>
</dbReference>
<dbReference type="GO" id="GO:0008020">
    <property type="term" value="F:G protein-coupled photoreceptor activity"/>
    <property type="evidence" value="ECO:0000250"/>
    <property type="project" value="UniProtKB"/>
</dbReference>
<dbReference type="GO" id="GO:0016038">
    <property type="term" value="P:absorption of visible light"/>
    <property type="evidence" value="ECO:0000250"/>
    <property type="project" value="UniProtKB"/>
</dbReference>
<dbReference type="GO" id="GO:0016056">
    <property type="term" value="P:G protein-coupled opsin signaling pathway"/>
    <property type="evidence" value="ECO:0000250"/>
    <property type="project" value="UniProtKB"/>
</dbReference>
<dbReference type="GO" id="GO:0007601">
    <property type="term" value="P:visual perception"/>
    <property type="evidence" value="ECO:0007669"/>
    <property type="project" value="UniProtKB-KW"/>
</dbReference>
<dbReference type="CDD" id="cd15080">
    <property type="entry name" value="7tmA_MWS_opsin"/>
    <property type="match status" value="1"/>
</dbReference>
<dbReference type="FunFam" id="1.20.1070.10:FF:000018">
    <property type="entry name" value="Rhodopsin"/>
    <property type="match status" value="1"/>
</dbReference>
<dbReference type="Gene3D" id="1.20.1070.10">
    <property type="entry name" value="Rhodopsin 7-helix transmembrane proteins"/>
    <property type="match status" value="1"/>
</dbReference>
<dbReference type="InterPro" id="IPR050125">
    <property type="entry name" value="GPCR_opsins"/>
</dbReference>
<dbReference type="InterPro" id="IPR000276">
    <property type="entry name" value="GPCR_Rhodpsn"/>
</dbReference>
<dbReference type="InterPro" id="IPR017452">
    <property type="entry name" value="GPCR_Rhodpsn_7TM"/>
</dbReference>
<dbReference type="InterPro" id="IPR001760">
    <property type="entry name" value="Opsin"/>
</dbReference>
<dbReference type="InterPro" id="IPR027430">
    <property type="entry name" value="Retinal_BS"/>
</dbReference>
<dbReference type="InterPro" id="IPR000732">
    <property type="entry name" value="Rhodopsin"/>
</dbReference>
<dbReference type="InterPro" id="IPR019477">
    <property type="entry name" value="Rhodopsin_N"/>
</dbReference>
<dbReference type="PANTHER" id="PTHR24240">
    <property type="entry name" value="OPSIN"/>
    <property type="match status" value="1"/>
</dbReference>
<dbReference type="Pfam" id="PF00001">
    <property type="entry name" value="7tm_1"/>
    <property type="match status" value="1"/>
</dbReference>
<dbReference type="Pfam" id="PF10413">
    <property type="entry name" value="Rhodopsin_N"/>
    <property type="match status" value="1"/>
</dbReference>
<dbReference type="PRINTS" id="PR00237">
    <property type="entry name" value="GPCRRHODOPSN"/>
</dbReference>
<dbReference type="PRINTS" id="PR00238">
    <property type="entry name" value="OPSIN"/>
</dbReference>
<dbReference type="PRINTS" id="PR00579">
    <property type="entry name" value="RHODOPSIN"/>
</dbReference>
<dbReference type="SUPFAM" id="SSF81321">
    <property type="entry name" value="Family A G protein-coupled receptor-like"/>
    <property type="match status" value="1"/>
</dbReference>
<dbReference type="PROSITE" id="PS00237">
    <property type="entry name" value="G_PROTEIN_RECEP_F1_1"/>
    <property type="match status" value="1"/>
</dbReference>
<dbReference type="PROSITE" id="PS50262">
    <property type="entry name" value="G_PROTEIN_RECEP_F1_2"/>
    <property type="match status" value="1"/>
</dbReference>
<dbReference type="PROSITE" id="PS00238">
    <property type="entry name" value="OPSIN"/>
    <property type="match status" value="1"/>
</dbReference>
<name>OPSD_ZOSOP</name>
<protein>
    <recommendedName>
        <fullName>Rhodopsin</fullName>
    </recommendedName>
</protein>
<evidence type="ECO:0000250" key="1">
    <source>
        <dbReference type="UniProtKB" id="P02699"/>
    </source>
</evidence>
<evidence type="ECO:0000250" key="2">
    <source>
        <dbReference type="UniProtKB" id="P08100"/>
    </source>
</evidence>
<evidence type="ECO:0000250" key="3">
    <source>
        <dbReference type="UniProtKB" id="P32309"/>
    </source>
</evidence>
<evidence type="ECO:0000250" key="4">
    <source>
        <dbReference type="UniProtKB" id="P35359"/>
    </source>
</evidence>
<evidence type="ECO:0000255" key="5"/>
<evidence type="ECO:0000255" key="6">
    <source>
        <dbReference type="PROSITE-ProRule" id="PRU00521"/>
    </source>
</evidence>
<evidence type="ECO:0000256" key="7">
    <source>
        <dbReference type="SAM" id="MobiDB-lite"/>
    </source>
</evidence>
<evidence type="ECO:0000305" key="8"/>
<reference key="1">
    <citation type="submission" date="1999-01" db="EMBL/GenBank/DDBJ databases">
        <title>Comparative analysis of opsins in Mediterranian coastal fish.</title>
        <authorList>
            <person name="Archer S.N."/>
            <person name="Hirano J."/>
        </authorList>
    </citation>
    <scope>NUCLEOTIDE SEQUENCE [MRNA]</scope>
    <source>
        <tissue>Retina</tissue>
    </source>
</reference>
<gene>
    <name type="primary">rho</name>
</gene>
<accession>Q9YGY9</accession>
<organism>
    <name type="scientific">Zosterisessor ophiocephalus</name>
    <name type="common">Grass goby</name>
    <name type="synonym">Gobius ophiocephalus</name>
    <dbReference type="NCBI Taxonomy" id="85428"/>
    <lineage>
        <taxon>Eukaryota</taxon>
        <taxon>Metazoa</taxon>
        <taxon>Chordata</taxon>
        <taxon>Craniata</taxon>
        <taxon>Vertebrata</taxon>
        <taxon>Euteleostomi</taxon>
        <taxon>Actinopterygii</taxon>
        <taxon>Neopterygii</taxon>
        <taxon>Teleostei</taxon>
        <taxon>Neoteleostei</taxon>
        <taxon>Acanthomorphata</taxon>
        <taxon>Gobiaria</taxon>
        <taxon>Gobiiformes</taxon>
        <taxon>Gobioidei</taxon>
        <taxon>Gobiidae</taxon>
        <taxon>Gobiinae</taxon>
        <taxon>Zosterisessor</taxon>
    </lineage>
</organism>
<feature type="chain" id="PRO_0000197729" description="Rhodopsin">
    <location>
        <begin position="1"/>
        <end position="352"/>
    </location>
</feature>
<feature type="topological domain" description="Extracellular" evidence="8">
    <location>
        <begin position="1"/>
        <end position="36"/>
    </location>
</feature>
<feature type="transmembrane region" description="Helical; Name=1" evidence="1">
    <location>
        <begin position="37"/>
        <end position="61"/>
    </location>
</feature>
<feature type="topological domain" description="Cytoplasmic" evidence="8">
    <location>
        <begin position="62"/>
        <end position="73"/>
    </location>
</feature>
<feature type="transmembrane region" description="Helical; Name=2" evidence="1">
    <location>
        <begin position="74"/>
        <end position="96"/>
    </location>
</feature>
<feature type="topological domain" description="Extracellular" evidence="8">
    <location>
        <begin position="97"/>
        <end position="110"/>
    </location>
</feature>
<feature type="transmembrane region" description="Helical; Name=3" evidence="1">
    <location>
        <begin position="111"/>
        <end position="133"/>
    </location>
</feature>
<feature type="topological domain" description="Cytoplasmic" evidence="8">
    <location>
        <begin position="134"/>
        <end position="152"/>
    </location>
</feature>
<feature type="transmembrane region" description="Helical; Name=4" evidence="1">
    <location>
        <begin position="153"/>
        <end position="173"/>
    </location>
</feature>
<feature type="topological domain" description="Extracellular" evidence="8">
    <location>
        <begin position="174"/>
        <end position="202"/>
    </location>
</feature>
<feature type="transmembrane region" description="Helical; Name=5" evidence="1">
    <location>
        <begin position="203"/>
        <end position="224"/>
    </location>
</feature>
<feature type="topological domain" description="Cytoplasmic" evidence="8">
    <location>
        <begin position="225"/>
        <end position="252"/>
    </location>
</feature>
<feature type="transmembrane region" description="Helical; Name=6" evidence="1">
    <location>
        <begin position="253"/>
        <end position="274"/>
    </location>
</feature>
<feature type="topological domain" description="Extracellular" evidence="8">
    <location>
        <begin position="275"/>
        <end position="286"/>
    </location>
</feature>
<feature type="transmembrane region" description="Helical; Name=7" evidence="1">
    <location>
        <begin position="287"/>
        <end position="308"/>
    </location>
</feature>
<feature type="topological domain" description="Cytoplasmic" evidence="8">
    <location>
        <begin position="309"/>
        <end position="352"/>
    </location>
</feature>
<feature type="region of interest" description="Disordered" evidence="7">
    <location>
        <begin position="331"/>
        <end position="352"/>
    </location>
</feature>
<feature type="short sequence motif" description="'Ionic lock' involved in activated form stabilization" evidence="1">
    <location>
        <begin position="134"/>
        <end position="136"/>
    </location>
</feature>
<feature type="compositionally biased region" description="Low complexity" evidence="7">
    <location>
        <begin position="342"/>
        <end position="352"/>
    </location>
</feature>
<feature type="site" description="Plays an important role in the conformation switch to the active conformation" evidence="1">
    <location>
        <position position="113"/>
    </location>
</feature>
<feature type="modified residue" description="N6-(retinylidene)lysine" evidence="1">
    <location>
        <position position="296"/>
    </location>
</feature>
<feature type="lipid moiety-binding region" description="S-palmitoyl cysteine" evidence="1">
    <location>
        <position position="322"/>
    </location>
</feature>
<feature type="lipid moiety-binding region" description="S-palmitoyl cysteine" evidence="1">
    <location>
        <position position="323"/>
    </location>
</feature>
<feature type="glycosylation site" description="N-linked (GlcNAc...) asparagine" evidence="5">
    <location>
        <position position="2"/>
    </location>
</feature>
<feature type="glycosylation site" description="N-linked (GlcNAc...) asparagine" evidence="5">
    <location>
        <position position="15"/>
    </location>
</feature>
<feature type="glycosylation site" description="N-linked (GlcNAc...) asparagine" evidence="5">
    <location>
        <position position="200"/>
    </location>
</feature>
<feature type="disulfide bond" evidence="6">
    <location>
        <begin position="110"/>
        <end position="187"/>
    </location>
</feature>
<sequence>MNGTEGPFFYIPMVNTTGIVRSPYEYPQYYLVNPAAYACLGAYMFFLILVGFPVNFLTLYVTLEHKKLRTPLNYILLNLAVADLFMVFGGFTTTMYTSMHGYFVLGRLGCNIEGFFATLGGEIALWSLVVLAIERWVVVCKPISNFRFGENHAIMGVAFTWFMASACAVPPLVGWSRYIPEGMQCSCGVDYYTRAEGFNNESFVIYMFIVHFCIPLAVVGFCYGRLLCAVKEAAAAQQESETTQRAEREVSRMVVIMVIGFLVCWLPYASVAWYIFTHQGSEFGPPFMTVPAFFAKSSSIYNPMIYICMNKQFRHCMITTLCCGKNPFEEEEGASTTKTEASSVSSSSVSPA</sequence>
<keyword id="KW-0966">Cell projection</keyword>
<keyword id="KW-0157">Chromophore</keyword>
<keyword id="KW-1015">Disulfide bond</keyword>
<keyword id="KW-0297">G-protein coupled receptor</keyword>
<keyword id="KW-0325">Glycoprotein</keyword>
<keyword id="KW-0449">Lipoprotein</keyword>
<keyword id="KW-0472">Membrane</keyword>
<keyword id="KW-0564">Palmitate</keyword>
<keyword id="KW-0597">Phosphoprotein</keyword>
<keyword id="KW-0600">Photoreceptor protein</keyword>
<keyword id="KW-0675">Receptor</keyword>
<keyword id="KW-0681">Retinal protein</keyword>
<keyword id="KW-0716">Sensory transduction</keyword>
<keyword id="KW-0807">Transducer</keyword>
<keyword id="KW-0812">Transmembrane</keyword>
<keyword id="KW-1133">Transmembrane helix</keyword>
<keyword id="KW-0844">Vision</keyword>
<proteinExistence type="evidence at transcript level"/>